<sequence>MNSSKTSPQRMTLSIVCSLAAGFCAASCYVTFRRGFNGEAIMTFDVFAFWYETPLYLGYASTVFWRGLSVVIFTSLAVLSSQLIISLRNQKHHGTARWAEIGEMQHAGYLQRYSRIKGPIFGKTCGPLWFGSYLTNGEQPHSLVVAPTRAGKGVGIVIPTLLTFKGSVIALDVKGELFELTSRARKASGDAVFKFSPLDSERKTHCYNPVLDIATLPPERQFTETRRLAANLITAKGKGAEGFIDGARDLFVAGILTCIERGTPTIGAVYDLFAQPGEKYKLFAQLAEESLNKEAQRIFDNMAGNDTKILTSYTSVLGDGGLNLWADPLIKAATSRSDFSVYDLRRKKTCIYLCVSPNDLEVLAPLMRLLFQQLVSILQRSLPGKDECHEVLFLLDEFKHLGKLEAIETAITTIAGYKGRFMFIIQSLSALTGTYDDAGKQNFLSNTGVQVFMATADDETPTYISKAIGEYTFKARSTSYSQASMFDHNIQISDQGAALLRPEQVRLLDDQSEIVLIKGRPPLKLRKVQYYSDRTLKRLFERQMGSLPEPAPLMLSDYSNDQVQSHLAEIANFNEDAAPRNRTVAEDHGSVKVGADIPERVMGINGDEDQADAREIPPELGCASRIDAGSGRSTAIVGPDYCTSAKIEVRTGTACEMKLNWVQFVSGGMLRFDKVYARSQLSLYEVSV</sequence>
<protein>
    <recommendedName>
        <fullName>Protein VirD4</fullName>
    </recommendedName>
</protein>
<organism>
    <name type="scientific">Rhizobium radiobacter</name>
    <name type="common">Agrobacterium tumefaciens</name>
    <name type="synonym">Agrobacterium radiobacter</name>
    <dbReference type="NCBI Taxonomy" id="358"/>
    <lineage>
        <taxon>Bacteria</taxon>
        <taxon>Pseudomonadati</taxon>
        <taxon>Pseudomonadota</taxon>
        <taxon>Alphaproteobacteria</taxon>
        <taxon>Hyphomicrobiales</taxon>
        <taxon>Rhizobiaceae</taxon>
        <taxon>Rhizobium/Agrobacterium group</taxon>
        <taxon>Agrobacterium</taxon>
        <taxon>Agrobacterium tumefaciens complex</taxon>
    </lineage>
</organism>
<feature type="chain" id="PRO_0000221653" description="Protein VirD4">
    <location>
        <begin position="1"/>
        <end position="688"/>
    </location>
</feature>
<feature type="transmembrane region" description="Helical" evidence="1">
    <location>
        <begin position="12"/>
        <end position="32"/>
    </location>
</feature>
<feature type="transmembrane region" description="Helical" evidence="1">
    <location>
        <begin position="67"/>
        <end position="87"/>
    </location>
</feature>
<feature type="transmembrane region" description="Helical" evidence="1">
    <location>
        <begin position="153"/>
        <end position="173"/>
    </location>
</feature>
<accession>P09817</accession>
<accession>P13465</accession>
<gene>
    <name type="primary">virD4</name>
</gene>
<geneLocation type="plasmid">
    <name>pTiA6NC</name>
</geneLocation>
<comment type="subcellular location">
    <subcellularLocation>
        <location evidence="2">Cell membrane</location>
        <topology evidence="2">Multi-pass membrane protein</topology>
    </subcellularLocation>
</comment>
<comment type="similarity">
    <text evidence="2">Belongs to the VirD4/TraG family.</text>
</comment>
<comment type="sequence caution" evidence="2">
    <conflict type="frameshift">
        <sequence resource="EMBL-CDS" id="AAA22117"/>
    </conflict>
</comment>
<reference key="1">
    <citation type="journal article" date="1987" name="Nucleic Acids Res.">
        <title>Molecular characterization of the virD operon from Agrobacterium tumefaciens.</title>
        <authorList>
            <person name="Porter S.G."/>
            <person name="Yanofsky M.F."/>
            <person name="Nester E.W."/>
        </authorList>
    </citation>
    <scope>NUCLEOTIDE SEQUENCE [GENOMIC DNA]</scope>
</reference>
<reference key="2">
    <citation type="journal article" date="1987" name="J. Bacteriol.">
        <title>Double-stranded cleavage of T-DNA and generation of single-stranded T-DNA molecules in Escherichia coli by a virD-encoded border-specific endonuclease from Agrobacterium tumefaciens.</title>
        <authorList>
            <person name="Jayaswal R.K."/>
            <person name="Veluthambi K."/>
            <person name="Gelvin S.B."/>
            <person name="Slightom J.L."/>
        </authorList>
    </citation>
    <scope>NUCLEOTIDE SEQUENCE [GENOMIC DNA]</scope>
</reference>
<name>VIRD4_RHIRD</name>
<dbReference type="EMBL" id="X06045">
    <property type="protein sequence ID" value="CAA29438.1"/>
    <property type="molecule type" value="Genomic_DNA"/>
</dbReference>
<dbReference type="EMBL" id="M17989">
    <property type="protein sequence ID" value="AAA22117.1"/>
    <property type="status" value="ALT_FRAME"/>
    <property type="molecule type" value="Genomic_DNA"/>
</dbReference>
<dbReference type="RefSeq" id="NP_059816.1">
    <property type="nucleotide sequence ID" value="NC_002377.1"/>
</dbReference>
<dbReference type="SMR" id="P09817"/>
<dbReference type="DIP" id="DIP-29959N"/>
<dbReference type="IntAct" id="P09817">
    <property type="interactions" value="2"/>
</dbReference>
<dbReference type="GO" id="GO:0005886">
    <property type="term" value="C:plasma membrane"/>
    <property type="evidence" value="ECO:0007669"/>
    <property type="project" value="UniProtKB-SubCell"/>
</dbReference>
<dbReference type="CDD" id="cd01127">
    <property type="entry name" value="TrwB_TraG_TraD_VirD4"/>
    <property type="match status" value="1"/>
</dbReference>
<dbReference type="FunFam" id="3.40.50.300:FF:001671">
    <property type="entry name" value="Type IV secretion system protein VirD4"/>
    <property type="match status" value="1"/>
</dbReference>
<dbReference type="Gene3D" id="3.40.50.300">
    <property type="entry name" value="P-loop containing nucleotide triphosphate hydrolases"/>
    <property type="match status" value="1"/>
</dbReference>
<dbReference type="InterPro" id="IPR027417">
    <property type="entry name" value="P-loop_NTPase"/>
</dbReference>
<dbReference type="InterPro" id="IPR051539">
    <property type="entry name" value="T4SS-coupling_protein"/>
</dbReference>
<dbReference type="InterPro" id="IPR003688">
    <property type="entry name" value="TraG/VirD4"/>
</dbReference>
<dbReference type="NCBIfam" id="NF010424">
    <property type="entry name" value="PRK13850.1"/>
    <property type="match status" value="1"/>
</dbReference>
<dbReference type="PANTHER" id="PTHR37937">
    <property type="entry name" value="CONJUGATIVE TRANSFER: DNA TRANSPORT"/>
    <property type="match status" value="1"/>
</dbReference>
<dbReference type="PANTHER" id="PTHR37937:SF1">
    <property type="entry name" value="CONJUGATIVE TRANSFER: DNA TRANSPORT"/>
    <property type="match status" value="1"/>
</dbReference>
<dbReference type="Pfam" id="PF02534">
    <property type="entry name" value="T4SS-DNA_transf"/>
    <property type="match status" value="1"/>
</dbReference>
<dbReference type="SUPFAM" id="SSF52540">
    <property type="entry name" value="P-loop containing nucleoside triphosphate hydrolases"/>
    <property type="match status" value="1"/>
</dbReference>
<proteinExistence type="inferred from homology"/>
<evidence type="ECO:0000255" key="1"/>
<evidence type="ECO:0000305" key="2"/>
<keyword id="KW-1003">Cell membrane</keyword>
<keyword id="KW-0184">Conjugation</keyword>
<keyword id="KW-0192">Crown gall tumor</keyword>
<keyword id="KW-0472">Membrane</keyword>
<keyword id="KW-0614">Plasmid</keyword>
<keyword id="KW-0812">Transmembrane</keyword>
<keyword id="KW-1133">Transmembrane helix</keyword>